<keyword id="KW-0025">Alternative splicing</keyword>
<keyword id="KW-0131">Cell cycle</keyword>
<keyword id="KW-0132">Cell division</keyword>
<keyword id="KW-0158">Chromosome</keyword>
<keyword id="KW-0159">Chromosome partition</keyword>
<keyword id="KW-0498">Mitosis</keyword>
<keyword id="KW-0539">Nucleus</keyword>
<keyword id="KW-1267">Proteomics identification</keyword>
<keyword id="KW-1185">Reference proteome</keyword>
<keyword id="KW-0677">Repeat</keyword>
<keyword id="KW-0802">TPR repeat</keyword>
<name>SCC4_HUMAN</name>
<accession>Q9Y6X3</accession>
<accession>Q66PT1</accession>
<accession>Q6P3S7</accession>
<accession>Q6ZTT2</accession>
<accession>Q9UFX8</accession>
<dbReference type="EMBL" id="AB020699">
    <property type="protein sequence ID" value="BAA74915.1"/>
    <property type="status" value="ALT_INIT"/>
    <property type="molecule type" value="mRNA"/>
</dbReference>
<dbReference type="EMBL" id="AK126227">
    <property type="protein sequence ID" value="BAC86497.1"/>
    <property type="molecule type" value="mRNA"/>
</dbReference>
<dbReference type="EMBL" id="AC022543">
    <property type="status" value="NOT_ANNOTATED_CDS"/>
    <property type="molecule type" value="Genomic_DNA"/>
</dbReference>
<dbReference type="EMBL" id="BC010222">
    <property type="protein sequence ID" value="AAH10222.4"/>
    <property type="molecule type" value="mRNA"/>
</dbReference>
<dbReference type="EMBL" id="BC063863">
    <property type="status" value="NOT_ANNOTATED_CDS"/>
    <property type="molecule type" value="mRNA"/>
</dbReference>
<dbReference type="EMBL" id="AL110250">
    <property type="protein sequence ID" value="CAB53698.1"/>
    <property type="molecule type" value="mRNA"/>
</dbReference>
<dbReference type="CCDS" id="CCDS32969.2">
    <molecule id="Q9Y6X3-1"/>
</dbReference>
<dbReference type="PIR" id="T14778">
    <property type="entry name" value="T14778"/>
</dbReference>
<dbReference type="RefSeq" id="NP_056144.3">
    <molecule id="Q9Y6X3-1"/>
    <property type="nucleotide sequence ID" value="NM_015329.3"/>
</dbReference>
<dbReference type="BioGRID" id="116959">
    <property type="interactions" value="142"/>
</dbReference>
<dbReference type="ComplexPortal" id="CPX-8070">
    <property type="entry name" value="SCC2-SCC4 cohesin loader complex"/>
</dbReference>
<dbReference type="CORUM" id="Q9Y6X3"/>
<dbReference type="DIP" id="DIP-29196N"/>
<dbReference type="FunCoup" id="Q9Y6X3">
    <property type="interactions" value="4550"/>
</dbReference>
<dbReference type="IntAct" id="Q9Y6X3">
    <property type="interactions" value="23"/>
</dbReference>
<dbReference type="MINT" id="Q9Y6X3"/>
<dbReference type="STRING" id="9606.ENSP00000262815"/>
<dbReference type="GlyCosmos" id="Q9Y6X3">
    <property type="glycosylation" value="2 sites, 1 glycan"/>
</dbReference>
<dbReference type="GlyGen" id="Q9Y6X3">
    <property type="glycosylation" value="2 sites, 1 O-linked glycan (2 sites)"/>
</dbReference>
<dbReference type="iPTMnet" id="Q9Y6X3"/>
<dbReference type="PhosphoSitePlus" id="Q9Y6X3"/>
<dbReference type="SwissPalm" id="Q9Y6X3"/>
<dbReference type="BioMuta" id="MAU2"/>
<dbReference type="DMDM" id="118597347"/>
<dbReference type="jPOST" id="Q9Y6X3"/>
<dbReference type="MassIVE" id="Q9Y6X3"/>
<dbReference type="PaxDb" id="9606-ENSP00000262815"/>
<dbReference type="PeptideAtlas" id="Q9Y6X3"/>
<dbReference type="ProteomicsDB" id="86811">
    <molecule id="Q9Y6X3-1"/>
</dbReference>
<dbReference type="ProteomicsDB" id="86812">
    <molecule id="Q9Y6X3-2"/>
</dbReference>
<dbReference type="ProteomicsDB" id="86813">
    <molecule id="Q9Y6X3-3"/>
</dbReference>
<dbReference type="Pumba" id="Q9Y6X3"/>
<dbReference type="Antibodypedia" id="28455">
    <property type="antibodies" value="37 antibodies from 16 providers"/>
</dbReference>
<dbReference type="DNASU" id="23383"/>
<dbReference type="Ensembl" id="ENST00000262815.13">
    <molecule id="Q9Y6X3-1"/>
    <property type="protein sequence ID" value="ENSP00000262815.9"/>
    <property type="gene ID" value="ENSG00000129933.21"/>
</dbReference>
<dbReference type="GeneID" id="23383"/>
<dbReference type="KEGG" id="hsa:23383"/>
<dbReference type="MANE-Select" id="ENST00000262815.13">
    <property type="protein sequence ID" value="ENSP00000262815.9"/>
    <property type="RefSeq nucleotide sequence ID" value="NM_015329.4"/>
    <property type="RefSeq protein sequence ID" value="NP_056144.3"/>
</dbReference>
<dbReference type="UCSC" id="uc002nmk.5">
    <molecule id="Q9Y6X3-1"/>
    <property type="organism name" value="human"/>
</dbReference>
<dbReference type="AGR" id="HGNC:29140"/>
<dbReference type="CTD" id="23383"/>
<dbReference type="DisGeNET" id="23383"/>
<dbReference type="GeneCards" id="MAU2"/>
<dbReference type="HGNC" id="HGNC:29140">
    <property type="gene designation" value="MAU2"/>
</dbReference>
<dbReference type="HPA" id="ENSG00000129933">
    <property type="expression patterns" value="Low tissue specificity"/>
</dbReference>
<dbReference type="MIM" id="614560">
    <property type="type" value="gene"/>
</dbReference>
<dbReference type="neXtProt" id="NX_Q9Y6X3"/>
<dbReference type="OpenTargets" id="ENSG00000129933"/>
<dbReference type="PharmGKB" id="PA134991458"/>
<dbReference type="VEuPathDB" id="HostDB:ENSG00000129933"/>
<dbReference type="eggNOG" id="KOG2300">
    <property type="taxonomic scope" value="Eukaryota"/>
</dbReference>
<dbReference type="GeneTree" id="ENSGT00390000012198"/>
<dbReference type="HOGENOM" id="CLU_030238_0_0_1"/>
<dbReference type="InParanoid" id="Q9Y6X3"/>
<dbReference type="OMA" id="QDAWYLS"/>
<dbReference type="OrthoDB" id="5565328at2759"/>
<dbReference type="PAN-GO" id="Q9Y6X3">
    <property type="GO annotations" value="4 GO annotations based on evolutionary models"/>
</dbReference>
<dbReference type="PhylomeDB" id="Q9Y6X3"/>
<dbReference type="TreeFam" id="TF105981"/>
<dbReference type="PathwayCommons" id="Q9Y6X3"/>
<dbReference type="Reactome" id="R-HSA-2470946">
    <property type="pathway name" value="Cohesin Loading onto Chromatin"/>
</dbReference>
<dbReference type="SignaLink" id="Q9Y6X3"/>
<dbReference type="BioGRID-ORCS" id="23383">
    <property type="hits" value="457 hits in 1175 CRISPR screens"/>
</dbReference>
<dbReference type="ChiTaRS" id="MAU2">
    <property type="organism name" value="human"/>
</dbReference>
<dbReference type="GenomeRNAi" id="23383"/>
<dbReference type="Pharos" id="Q9Y6X3">
    <property type="development level" value="Tdark"/>
</dbReference>
<dbReference type="PRO" id="PR:Q9Y6X3"/>
<dbReference type="Proteomes" id="UP000005640">
    <property type="component" value="Chromosome 19"/>
</dbReference>
<dbReference type="RNAct" id="Q9Y6X3">
    <property type="molecule type" value="protein"/>
</dbReference>
<dbReference type="Bgee" id="ENSG00000129933">
    <property type="expression patterns" value="Expressed in lateral globus pallidus and 199 other cell types or tissues"/>
</dbReference>
<dbReference type="ExpressionAtlas" id="Q9Y6X3">
    <property type="expression patterns" value="baseline and differential"/>
</dbReference>
<dbReference type="GO" id="GO:0000785">
    <property type="term" value="C:chromatin"/>
    <property type="evidence" value="ECO:0000314"/>
    <property type="project" value="UniProtKB"/>
</dbReference>
<dbReference type="GO" id="GO:0016604">
    <property type="term" value="C:nuclear body"/>
    <property type="evidence" value="ECO:0000314"/>
    <property type="project" value="HPA"/>
</dbReference>
<dbReference type="GO" id="GO:0005654">
    <property type="term" value="C:nucleoplasm"/>
    <property type="evidence" value="ECO:0000314"/>
    <property type="project" value="HPA"/>
</dbReference>
<dbReference type="GO" id="GO:0005634">
    <property type="term" value="C:nucleus"/>
    <property type="evidence" value="ECO:0000314"/>
    <property type="project" value="UniProtKB"/>
</dbReference>
<dbReference type="GO" id="GO:0090694">
    <property type="term" value="C:Scc2-Scc4 cohesin loading complex"/>
    <property type="evidence" value="ECO:0000314"/>
    <property type="project" value="UniProtKB"/>
</dbReference>
<dbReference type="GO" id="GO:0032116">
    <property type="term" value="C:SMC loading complex"/>
    <property type="evidence" value="ECO:0000314"/>
    <property type="project" value="UniProtKB"/>
</dbReference>
<dbReference type="GO" id="GO:0061775">
    <property type="term" value="F:cohesin loader activity"/>
    <property type="evidence" value="ECO:0000315"/>
    <property type="project" value="UniProtKB"/>
</dbReference>
<dbReference type="GO" id="GO:0051301">
    <property type="term" value="P:cell division"/>
    <property type="evidence" value="ECO:0007669"/>
    <property type="project" value="UniProtKB-KW"/>
</dbReference>
<dbReference type="GO" id="GO:0007059">
    <property type="term" value="P:chromosome segregation"/>
    <property type="evidence" value="ECO:0007669"/>
    <property type="project" value="UniProtKB-KW"/>
</dbReference>
<dbReference type="GO" id="GO:0034088">
    <property type="term" value="P:maintenance of mitotic sister chromatid cohesion"/>
    <property type="evidence" value="ECO:0000315"/>
    <property type="project" value="UniProtKB"/>
</dbReference>
<dbReference type="GO" id="GO:0007064">
    <property type="term" value="P:mitotic sister chromatid cohesion"/>
    <property type="evidence" value="ECO:0000314"/>
    <property type="project" value="UniProtKB"/>
</dbReference>
<dbReference type="FunFam" id="1.25.40.10:FF:000216">
    <property type="entry name" value="MAU2 chromatid cohesion factor homolog"/>
    <property type="match status" value="1"/>
</dbReference>
<dbReference type="Gene3D" id="1.25.40.10">
    <property type="entry name" value="Tetratricopeptide repeat domain"/>
    <property type="match status" value="2"/>
</dbReference>
<dbReference type="InterPro" id="IPR019440">
    <property type="entry name" value="MAU2"/>
</dbReference>
<dbReference type="InterPro" id="IPR011990">
    <property type="entry name" value="TPR-like_helical_dom_sf"/>
</dbReference>
<dbReference type="InterPro" id="IPR019734">
    <property type="entry name" value="TPR_rpt"/>
</dbReference>
<dbReference type="PANTHER" id="PTHR21394">
    <property type="entry name" value="MAU2 CHROMATID COHESION FACTOR HOMOLOG"/>
    <property type="match status" value="1"/>
</dbReference>
<dbReference type="Pfam" id="PF10345">
    <property type="entry name" value="Cohesin_load"/>
    <property type="match status" value="1"/>
</dbReference>
<dbReference type="SMART" id="SM00028">
    <property type="entry name" value="TPR"/>
    <property type="match status" value="3"/>
</dbReference>
<dbReference type="SUPFAM" id="SSF48452">
    <property type="entry name" value="TPR-like"/>
    <property type="match status" value="2"/>
</dbReference>
<organism>
    <name type="scientific">Homo sapiens</name>
    <name type="common">Human</name>
    <dbReference type="NCBI Taxonomy" id="9606"/>
    <lineage>
        <taxon>Eukaryota</taxon>
        <taxon>Metazoa</taxon>
        <taxon>Chordata</taxon>
        <taxon>Craniata</taxon>
        <taxon>Vertebrata</taxon>
        <taxon>Euteleostomi</taxon>
        <taxon>Mammalia</taxon>
        <taxon>Eutheria</taxon>
        <taxon>Euarchontoglires</taxon>
        <taxon>Primates</taxon>
        <taxon>Haplorrhini</taxon>
        <taxon>Catarrhini</taxon>
        <taxon>Hominidae</taxon>
        <taxon>Homo</taxon>
    </lineage>
</organism>
<protein>
    <recommendedName>
        <fullName>MAU2 chromatid cohesion factor homolog</fullName>
        <shortName>MAU-2</shortName>
    </recommendedName>
    <alternativeName>
        <fullName>Cohesin loading complex subunit SCC4 homolog</fullName>
    </alternativeName>
</protein>
<comment type="function">
    <text evidence="2 3 5 6">Plays an important role in the loading of the cohesin complex on to DNA. Forms a heterodimeric complex (also known as cohesin loading complex) with NIPBL/SCC2 which mediates the loading of the cohesin complex onto chromatin (PubMed:22628566, PubMed:28167679). Plays a role in sister chromatid cohesion and normal progression through prometaphase (PubMed:16682347, PubMed:16802858).</text>
</comment>
<comment type="subunit">
    <text evidence="2 3 4 5 6">Heterodimerizes with MAU2/SCC2 to form the cohesin loading complex (PubMed:16682347, PubMed:16802858, PubMed:21934712, PubMed:22628566, PubMed:28167679). The NIPBL-MAU2 heterodimer interacts with the SMC1A-SMC3 heterodimer and with the cohesin complex composed of SMC1A, SMC3, RAD21 and STAG1 (PubMed:22628566).</text>
</comment>
<comment type="interaction">
    <interactant intactId="EBI-4395624">
        <id>Q9Y6X3</id>
    </interactant>
    <interactant intactId="EBI-9679267">
        <id>Q70IA8</id>
        <label>MOB3C</label>
    </interactant>
    <organismsDiffer>false</organismsDiffer>
    <experiments>2</experiments>
</comment>
<comment type="interaction">
    <interactant intactId="EBI-4395624">
        <id>Q9Y6X3</id>
    </interactant>
    <interactant intactId="EBI-722767">
        <id>Q6KC79</id>
        <label>NIPBL</label>
    </interactant>
    <organismsDiffer>false</organismsDiffer>
    <experiments>7</experiments>
</comment>
<comment type="subcellular location">
    <subcellularLocation>
        <location evidence="2 3">Nucleus</location>
        <location evidence="2 3">Nucleoplasm</location>
    </subcellularLocation>
    <subcellularLocation>
        <location evidence="6">Nucleus</location>
    </subcellularLocation>
    <subcellularLocation>
        <location evidence="1">Chromosome</location>
    </subcellularLocation>
    <text>Binds to chromatin from the end of mitosis until prophase.</text>
</comment>
<comment type="alternative products">
    <event type="alternative splicing"/>
    <isoform>
        <id>Q9Y6X3-1</id>
        <name>1</name>
        <sequence type="displayed"/>
    </isoform>
    <isoform>
        <id>Q9Y6X3-2</id>
        <name>2</name>
        <sequence type="described" ref="VSP_021224 VSP_021226"/>
    </isoform>
    <isoform>
        <id>Q9Y6X3-3</id>
        <name>3</name>
        <sequence type="described" ref="VSP_021223 VSP_021225"/>
    </isoform>
</comment>
<comment type="similarity">
    <text evidence="11">Belongs to the SCC4/mau-2 family.</text>
</comment>
<comment type="sequence caution" evidence="11">
    <conflict type="erroneous initiation">
        <sequence resource="EMBL-CDS" id="BAA74915"/>
    </conflict>
    <text>Extended N-terminus.</text>
</comment>
<gene>
    <name type="primary">MAU2</name>
    <name type="synonym">KIAA0892</name>
    <name evidence="10" type="synonym">SCC4</name>
</gene>
<reference key="1">
    <citation type="journal article" date="1998" name="DNA Res.">
        <title>Prediction of the coding sequences of unidentified human genes. XII. The complete sequences of 100 new cDNA clones from brain which code for large proteins in vitro.</title>
        <authorList>
            <person name="Nagase T."/>
            <person name="Ishikawa K."/>
            <person name="Suyama M."/>
            <person name="Kikuno R."/>
            <person name="Hirosawa M."/>
            <person name="Miyajima N."/>
            <person name="Tanaka A."/>
            <person name="Kotani H."/>
            <person name="Nomura N."/>
            <person name="Ohara O."/>
        </authorList>
    </citation>
    <scope>NUCLEOTIDE SEQUENCE [LARGE SCALE MRNA] (ISOFORM 1)</scope>
    <source>
        <tissue>Brain</tissue>
    </source>
</reference>
<reference key="2">
    <citation type="journal article" date="2004" name="Nat. Genet.">
        <title>Complete sequencing and characterization of 21,243 full-length human cDNAs.</title>
        <authorList>
            <person name="Ota T."/>
            <person name="Suzuki Y."/>
            <person name="Nishikawa T."/>
            <person name="Otsuki T."/>
            <person name="Sugiyama T."/>
            <person name="Irie R."/>
            <person name="Wakamatsu A."/>
            <person name="Hayashi K."/>
            <person name="Sato H."/>
            <person name="Nagai K."/>
            <person name="Kimura K."/>
            <person name="Makita H."/>
            <person name="Sekine M."/>
            <person name="Obayashi M."/>
            <person name="Nishi T."/>
            <person name="Shibahara T."/>
            <person name="Tanaka T."/>
            <person name="Ishii S."/>
            <person name="Yamamoto J."/>
            <person name="Saito K."/>
            <person name="Kawai Y."/>
            <person name="Isono Y."/>
            <person name="Nakamura Y."/>
            <person name="Nagahari K."/>
            <person name="Murakami K."/>
            <person name="Yasuda T."/>
            <person name="Iwayanagi T."/>
            <person name="Wagatsuma M."/>
            <person name="Shiratori A."/>
            <person name="Sudo H."/>
            <person name="Hosoiri T."/>
            <person name="Kaku Y."/>
            <person name="Kodaira H."/>
            <person name="Kondo H."/>
            <person name="Sugawara M."/>
            <person name="Takahashi M."/>
            <person name="Kanda K."/>
            <person name="Yokoi T."/>
            <person name="Furuya T."/>
            <person name="Kikkawa E."/>
            <person name="Omura Y."/>
            <person name="Abe K."/>
            <person name="Kamihara K."/>
            <person name="Katsuta N."/>
            <person name="Sato K."/>
            <person name="Tanikawa M."/>
            <person name="Yamazaki M."/>
            <person name="Ninomiya K."/>
            <person name="Ishibashi T."/>
            <person name="Yamashita H."/>
            <person name="Murakawa K."/>
            <person name="Fujimori K."/>
            <person name="Tanai H."/>
            <person name="Kimata M."/>
            <person name="Watanabe M."/>
            <person name="Hiraoka S."/>
            <person name="Chiba Y."/>
            <person name="Ishida S."/>
            <person name="Ono Y."/>
            <person name="Takiguchi S."/>
            <person name="Watanabe S."/>
            <person name="Yosida M."/>
            <person name="Hotuta T."/>
            <person name="Kusano J."/>
            <person name="Kanehori K."/>
            <person name="Takahashi-Fujii A."/>
            <person name="Hara H."/>
            <person name="Tanase T.-O."/>
            <person name="Nomura Y."/>
            <person name="Togiya S."/>
            <person name="Komai F."/>
            <person name="Hara R."/>
            <person name="Takeuchi K."/>
            <person name="Arita M."/>
            <person name="Imose N."/>
            <person name="Musashino K."/>
            <person name="Yuuki H."/>
            <person name="Oshima A."/>
            <person name="Sasaki N."/>
            <person name="Aotsuka S."/>
            <person name="Yoshikawa Y."/>
            <person name="Matsunawa H."/>
            <person name="Ichihara T."/>
            <person name="Shiohata N."/>
            <person name="Sano S."/>
            <person name="Moriya S."/>
            <person name="Momiyama H."/>
            <person name="Satoh N."/>
            <person name="Takami S."/>
            <person name="Terashima Y."/>
            <person name="Suzuki O."/>
            <person name="Nakagawa S."/>
            <person name="Senoh A."/>
            <person name="Mizoguchi H."/>
            <person name="Goto Y."/>
            <person name="Shimizu F."/>
            <person name="Wakebe H."/>
            <person name="Hishigaki H."/>
            <person name="Watanabe T."/>
            <person name="Sugiyama A."/>
            <person name="Takemoto M."/>
            <person name="Kawakami B."/>
            <person name="Yamazaki M."/>
            <person name="Watanabe K."/>
            <person name="Kumagai A."/>
            <person name="Itakura S."/>
            <person name="Fukuzumi Y."/>
            <person name="Fujimori Y."/>
            <person name="Komiyama M."/>
            <person name="Tashiro H."/>
            <person name="Tanigami A."/>
            <person name="Fujiwara T."/>
            <person name="Ono T."/>
            <person name="Yamada K."/>
            <person name="Fujii Y."/>
            <person name="Ozaki K."/>
            <person name="Hirao M."/>
            <person name="Ohmori Y."/>
            <person name="Kawabata A."/>
            <person name="Hikiji T."/>
            <person name="Kobatake N."/>
            <person name="Inagaki H."/>
            <person name="Ikema Y."/>
            <person name="Okamoto S."/>
            <person name="Okitani R."/>
            <person name="Kawakami T."/>
            <person name="Noguchi S."/>
            <person name="Itoh T."/>
            <person name="Shigeta K."/>
            <person name="Senba T."/>
            <person name="Matsumura K."/>
            <person name="Nakajima Y."/>
            <person name="Mizuno T."/>
            <person name="Morinaga M."/>
            <person name="Sasaki M."/>
            <person name="Togashi T."/>
            <person name="Oyama M."/>
            <person name="Hata H."/>
            <person name="Watanabe M."/>
            <person name="Komatsu T."/>
            <person name="Mizushima-Sugano J."/>
            <person name="Satoh T."/>
            <person name="Shirai Y."/>
            <person name="Takahashi Y."/>
            <person name="Nakagawa K."/>
            <person name="Okumura K."/>
            <person name="Nagase T."/>
            <person name="Nomura N."/>
            <person name="Kikuchi H."/>
            <person name="Masuho Y."/>
            <person name="Yamashita R."/>
            <person name="Nakai K."/>
            <person name="Yada T."/>
            <person name="Nakamura Y."/>
            <person name="Ohara O."/>
            <person name="Isogai T."/>
            <person name="Sugano S."/>
        </authorList>
    </citation>
    <scope>NUCLEOTIDE SEQUENCE [LARGE SCALE MRNA] (ISOFORM 3)</scope>
    <source>
        <tissue>Thymus</tissue>
    </source>
</reference>
<reference key="3">
    <citation type="journal article" date="2004" name="Nature">
        <title>The DNA sequence and biology of human chromosome 19.</title>
        <authorList>
            <person name="Grimwood J."/>
            <person name="Gordon L.A."/>
            <person name="Olsen A.S."/>
            <person name="Terry A."/>
            <person name="Schmutz J."/>
            <person name="Lamerdin J.E."/>
            <person name="Hellsten U."/>
            <person name="Goodstein D."/>
            <person name="Couronne O."/>
            <person name="Tran-Gyamfi M."/>
            <person name="Aerts A."/>
            <person name="Altherr M."/>
            <person name="Ashworth L."/>
            <person name="Bajorek E."/>
            <person name="Black S."/>
            <person name="Branscomb E."/>
            <person name="Caenepeel S."/>
            <person name="Carrano A.V."/>
            <person name="Caoile C."/>
            <person name="Chan Y.M."/>
            <person name="Christensen M."/>
            <person name="Cleland C.A."/>
            <person name="Copeland A."/>
            <person name="Dalin E."/>
            <person name="Dehal P."/>
            <person name="Denys M."/>
            <person name="Detter J.C."/>
            <person name="Escobar J."/>
            <person name="Flowers D."/>
            <person name="Fotopulos D."/>
            <person name="Garcia C."/>
            <person name="Georgescu A.M."/>
            <person name="Glavina T."/>
            <person name="Gomez M."/>
            <person name="Gonzales E."/>
            <person name="Groza M."/>
            <person name="Hammon N."/>
            <person name="Hawkins T."/>
            <person name="Haydu L."/>
            <person name="Ho I."/>
            <person name="Huang W."/>
            <person name="Israni S."/>
            <person name="Jett J."/>
            <person name="Kadner K."/>
            <person name="Kimball H."/>
            <person name="Kobayashi A."/>
            <person name="Larionov V."/>
            <person name="Leem S.-H."/>
            <person name="Lopez F."/>
            <person name="Lou Y."/>
            <person name="Lowry S."/>
            <person name="Malfatti S."/>
            <person name="Martinez D."/>
            <person name="McCready P.M."/>
            <person name="Medina C."/>
            <person name="Morgan J."/>
            <person name="Nelson K."/>
            <person name="Nolan M."/>
            <person name="Ovcharenko I."/>
            <person name="Pitluck S."/>
            <person name="Pollard M."/>
            <person name="Popkie A.P."/>
            <person name="Predki P."/>
            <person name="Quan G."/>
            <person name="Ramirez L."/>
            <person name="Rash S."/>
            <person name="Retterer J."/>
            <person name="Rodriguez A."/>
            <person name="Rogers S."/>
            <person name="Salamov A."/>
            <person name="Salazar A."/>
            <person name="She X."/>
            <person name="Smith D."/>
            <person name="Slezak T."/>
            <person name="Solovyev V."/>
            <person name="Thayer N."/>
            <person name="Tice H."/>
            <person name="Tsai M."/>
            <person name="Ustaszewska A."/>
            <person name="Vo N."/>
            <person name="Wagner M."/>
            <person name="Wheeler J."/>
            <person name="Wu K."/>
            <person name="Xie G."/>
            <person name="Yang J."/>
            <person name="Dubchak I."/>
            <person name="Furey T.S."/>
            <person name="DeJong P."/>
            <person name="Dickson M."/>
            <person name="Gordon D."/>
            <person name="Eichler E.E."/>
            <person name="Pennacchio L.A."/>
            <person name="Richardson P."/>
            <person name="Stubbs L."/>
            <person name="Rokhsar D.S."/>
            <person name="Myers R.M."/>
            <person name="Rubin E.M."/>
            <person name="Lucas S.M."/>
        </authorList>
    </citation>
    <scope>NUCLEOTIDE SEQUENCE [LARGE SCALE GENOMIC DNA]</scope>
</reference>
<reference key="4">
    <citation type="journal article" date="2004" name="Genome Res.">
        <title>The status, quality, and expansion of the NIH full-length cDNA project: the Mammalian Gene Collection (MGC).</title>
        <authorList>
            <consortium name="The MGC Project Team"/>
        </authorList>
    </citation>
    <scope>NUCLEOTIDE SEQUENCE [LARGE SCALE MRNA] (ISOFORM 2)</scope>
    <scope>NUCLEOTIDE SEQUENCE [LARGE SCALE MRNA] OF 393-613 (ISOFORM 1)</scope>
    <source>
        <tissue>Choriocarcinoma</tissue>
        <tissue>PNS</tissue>
    </source>
</reference>
<reference key="5">
    <citation type="journal article" date="2007" name="BMC Genomics">
        <title>The full-ORF clone resource of the German cDNA consortium.</title>
        <authorList>
            <person name="Bechtel S."/>
            <person name="Rosenfelder H."/>
            <person name="Duda A."/>
            <person name="Schmidt C.P."/>
            <person name="Ernst U."/>
            <person name="Wellenreuther R."/>
            <person name="Mehrle A."/>
            <person name="Schuster C."/>
            <person name="Bahr A."/>
            <person name="Bloecker H."/>
            <person name="Heubner D."/>
            <person name="Hoerlein A."/>
            <person name="Michel G."/>
            <person name="Wedler H."/>
            <person name="Koehrer K."/>
            <person name="Ottenwaelder B."/>
            <person name="Poustka A."/>
            <person name="Wiemann S."/>
            <person name="Schupp I."/>
        </authorList>
    </citation>
    <scope>NUCLEOTIDE SEQUENCE [LARGE SCALE MRNA] OF 396-613 (ISOFORM 2)</scope>
    <source>
        <tissue>Testis</tissue>
    </source>
</reference>
<reference key="6">
    <citation type="journal article" date="2006" name="PLoS Biol.">
        <title>Metazoan Scc4 homologs link sister chromatid cohesion to cell and axon migration guidance.</title>
        <authorList>
            <person name="Seitan V.C."/>
            <person name="Banks P."/>
            <person name="Laval S."/>
            <person name="Majid N.A."/>
            <person name="Dorsett D."/>
            <person name="Rana A."/>
            <person name="Smith J."/>
            <person name="Bateman A."/>
            <person name="Krpic S."/>
            <person name="Hostert A."/>
            <person name="Rollins R.A."/>
            <person name="Erdjument-Bromage H."/>
            <person name="Tempst P."/>
            <person name="Benard C.Y."/>
            <person name="Hekimi S."/>
            <person name="Newbury S.F."/>
            <person name="Strachan T."/>
        </authorList>
    </citation>
    <scope>FUNCTION</scope>
    <scope>INTERACTION WITH NIPBL</scope>
    <scope>SUBCELLULAR LOCATION</scope>
</reference>
<reference key="7">
    <citation type="journal article" date="2006" name="Curr. Biol.">
        <title>Human Scc4 is required for cohesin binding to chromatin, sister-chromatid cohesion, and mitotic progression.</title>
        <authorList>
            <person name="Watrin E."/>
            <person name="Schleiffer A."/>
            <person name="Tanaka K."/>
            <person name="Eisenhaber F."/>
            <person name="Nasmyth K."/>
            <person name="Peters J.M."/>
        </authorList>
    </citation>
    <scope>FUNCTION</scope>
    <scope>INTERACTION WITH NIPBL</scope>
    <scope>SUBCELLULAR LOCATION</scope>
</reference>
<reference key="8">
    <citation type="journal article" date="2012" name="Eur. J. Hum. Genet.">
        <title>Isolated NIBPL missense mutations that cause Cornelia de Lange syndrome alter MAU2 interaction.</title>
        <authorList>
            <person name="Braunholz D."/>
            <person name="Hullings M."/>
            <person name="Gil-Rodriguez M.C."/>
            <person name="Fincher C.T."/>
            <person name="Mallozzi M.B."/>
            <person name="Loy E."/>
            <person name="Albrecht M."/>
            <person name="Kaur M."/>
            <person name="Limon J."/>
            <person name="Rampuria A."/>
            <person name="Clark D."/>
            <person name="Kline A."/>
            <person name="Dalski A."/>
            <person name="Eckhold J."/>
            <person name="Tzschach A."/>
            <person name="Hennekam R."/>
            <person name="Gillessen-Kaesbach G."/>
            <person name="Wierzba J."/>
            <person name="Krantz I.D."/>
            <person name="Deardorff M.A."/>
            <person name="Kaiser F.J."/>
        </authorList>
    </citation>
    <scope>INTERACTION WITH NIPBL</scope>
    <scope>VARIANT 4-GLN--ALA-8 DEL</scope>
    <scope>CHARACTERIZATION OF VARIANT 4-GLN--ALA-8 DEL</scope>
</reference>
<reference key="9">
    <citation type="journal article" date="2012" name="Proc. Natl. Acad. Sci. U.S.A.">
        <title>In vitro loading of human cohesin on DNA by the human Scc2-Scc4 loader complex.</title>
        <authorList>
            <person name="Bermudez V.P."/>
            <person name="Farina A."/>
            <person name="Higashi T.L."/>
            <person name="Du F."/>
            <person name="Tappin I."/>
            <person name="Takahashi T.S."/>
            <person name="Hurwitz J."/>
        </authorList>
    </citation>
    <scope>FUNCTION</scope>
    <scope>INTERACTION WITH NIPBL; HETERODIMER SMC1A-SMC3 AND THE COHESIN COMPLEX</scope>
</reference>
<reference key="10">
    <citation type="journal article" date="2017" name="J. Cell Sci.">
        <title>Independent mechanisms recruit the cohesin loader protein NIPBL to sites of DNA damage.</title>
        <authorList>
            <person name="Bot C."/>
            <person name="Pfeiffer A."/>
            <person name="Giordano F."/>
            <person name="Manjeera D.E."/>
            <person name="Dantuma N.P."/>
            <person name="Stroem L."/>
        </authorList>
    </citation>
    <scope>FUNCTION</scope>
    <scope>INTERACTION WITH NIPBL</scope>
    <scope>SUBCELLULAR LOCATION</scope>
</reference>
<proteinExistence type="evidence at protein level"/>
<evidence type="ECO:0000250" key="1">
    <source>
        <dbReference type="UniProtKB" id="Q9D2X5"/>
    </source>
</evidence>
<evidence type="ECO:0000269" key="2">
    <source>
    </source>
</evidence>
<evidence type="ECO:0000269" key="3">
    <source>
    </source>
</evidence>
<evidence type="ECO:0000269" key="4">
    <source>
    </source>
</evidence>
<evidence type="ECO:0000269" key="5">
    <source>
    </source>
</evidence>
<evidence type="ECO:0000269" key="6">
    <source>
    </source>
</evidence>
<evidence type="ECO:0000303" key="7">
    <source>
    </source>
</evidence>
<evidence type="ECO:0000303" key="8">
    <source>
    </source>
</evidence>
<evidence type="ECO:0000303" key="9">
    <source>
    </source>
</evidence>
<evidence type="ECO:0000303" key="10">
    <source>
    </source>
</evidence>
<evidence type="ECO:0000305" key="11"/>
<sequence>MAAQAAAAAQAAAAQAAQAEAADSWYLALLGFAEHFRTSSPPKIRLCVHCLQAVFPFKPPQRIEARTHLQLGSVLYHHTKNSEQARSHLEKAWLISQQIPQFEDVKFEAASLLSELYCQENSVDAAKPLLRKAIQISQQTPYWHCRLLFQLAQLHTLEKDLVSACDLLGVGAEYARVVGSEYTRALFLLSKGMLLLMERKLQEVHPLLTLCGQIVENWQGNPIQKESLRVFFLVLQVTHYLDAGQVKSVKPCLKQLQQCIQTISTLHDDEILPSNPADLFHWLPKEHMCVLVYLVTVMHSMQAGYLEKAQKYTDKALMQLEKLKMLDCSPILSSFQVILLEHIIMCRLVTGHKATALQEISQVCQLCQQSPRLFSNHAAQLHTLLGLYCVSVNCMDNAEAQFTTALRLTNHQELWAFIVTNLASVYIREGNRHQEVLYSLLERINPDHSFPVSSHCLRAAAFYVRGLFSFFQGRYNEAKRFLRETLKMSNAEDLNRLTACSLVLLGHIFYVLGNHRESNNMVVPAMQLASKIPDMSVQLWSSALLRDLNKACGNAMDAHEAAQMHQNFSQQLLQDHIEACSLPEHNLITWTDGPPPVQFQAQNGPNTSLASLL</sequence>
<feature type="chain" id="PRO_0000254548" description="MAU2 chromatid cohesion factor homolog">
    <location>
        <begin position="1"/>
        <end position="613"/>
    </location>
</feature>
<feature type="repeat" description="TPR 1">
    <location>
        <begin position="107"/>
        <end position="140"/>
    </location>
</feature>
<feature type="repeat" description="TPR 2">
    <location>
        <begin position="379"/>
        <end position="412"/>
    </location>
</feature>
<feature type="repeat" description="TPR 3">
    <location>
        <begin position="459"/>
        <end position="492"/>
    </location>
</feature>
<feature type="repeat" description="TPR 4">
    <location>
        <begin position="499"/>
        <end position="532"/>
    </location>
</feature>
<feature type="region of interest" description="Sufficient for interaction with NIPBL">
    <location>
        <begin position="1"/>
        <end position="115"/>
    </location>
</feature>
<feature type="splice variant" id="VSP_021223" description="In isoform 3." evidence="7">
    <location>
        <begin position="1"/>
        <end position="424"/>
    </location>
</feature>
<feature type="splice variant" id="VSP_021224" description="In isoform 2." evidence="8 9">
    <location>
        <begin position="1"/>
        <end position="394"/>
    </location>
</feature>
<feature type="splice variant" id="VSP_021225" description="In isoform 3." evidence="7">
    <original>VYIREGNRHQEVL</original>
    <variation>MQNGADWLFPPQL</variation>
    <location>
        <begin position="425"/>
        <end position="437"/>
    </location>
</feature>
<feature type="splice variant" id="VSP_021226" description="In isoform 2." evidence="8 9">
    <location>
        <position position="436"/>
    </location>
</feature>
<feature type="sequence variant" id="VAR_073019" description="Found in a patient with CDLS1; uncertain significance; no effect on interaction with NIBPL." evidence="4">
    <location>
        <begin position="4"/>
        <end position="8"/>
    </location>
</feature>